<comment type="function">
    <text evidence="1">One of the early assembly proteins it binds 23S rRNA. One of the proteins that surrounds the polypeptide exit tunnel on the outside of the ribosome. Forms the main docking site for trigger factor binding to the ribosome.</text>
</comment>
<comment type="subunit">
    <text evidence="1">Part of the 50S ribosomal subunit. Contacts protein L29, and trigger factor when it is bound to the ribosome.</text>
</comment>
<comment type="similarity">
    <text evidence="1">Belongs to the universal ribosomal protein uL23 family.</text>
</comment>
<accession>A5F547</accession>
<accession>C3LXJ3</accession>
<dbReference type="EMBL" id="CP000627">
    <property type="protein sequence ID" value="ABQ20272.1"/>
    <property type="molecule type" value="Genomic_DNA"/>
</dbReference>
<dbReference type="EMBL" id="CP001235">
    <property type="protein sequence ID" value="ACP10693.1"/>
    <property type="molecule type" value="Genomic_DNA"/>
</dbReference>
<dbReference type="RefSeq" id="WP_000617542.1">
    <property type="nucleotide sequence ID" value="NZ_JAACZH010000007.1"/>
</dbReference>
<dbReference type="SMR" id="A5F547"/>
<dbReference type="GeneID" id="88785153"/>
<dbReference type="KEGG" id="vco:VC0395_A2172"/>
<dbReference type="KEGG" id="vcr:VC395_2707"/>
<dbReference type="PATRIC" id="fig|345073.21.peg.2607"/>
<dbReference type="eggNOG" id="COG0089">
    <property type="taxonomic scope" value="Bacteria"/>
</dbReference>
<dbReference type="HOGENOM" id="CLU_037562_3_1_6"/>
<dbReference type="OrthoDB" id="9793353at2"/>
<dbReference type="Proteomes" id="UP000000249">
    <property type="component" value="Chromosome 2"/>
</dbReference>
<dbReference type="GO" id="GO:1990904">
    <property type="term" value="C:ribonucleoprotein complex"/>
    <property type="evidence" value="ECO:0007669"/>
    <property type="project" value="UniProtKB-KW"/>
</dbReference>
<dbReference type="GO" id="GO:0005840">
    <property type="term" value="C:ribosome"/>
    <property type="evidence" value="ECO:0007669"/>
    <property type="project" value="UniProtKB-KW"/>
</dbReference>
<dbReference type="GO" id="GO:0019843">
    <property type="term" value="F:rRNA binding"/>
    <property type="evidence" value="ECO:0007669"/>
    <property type="project" value="UniProtKB-UniRule"/>
</dbReference>
<dbReference type="GO" id="GO:0003735">
    <property type="term" value="F:structural constituent of ribosome"/>
    <property type="evidence" value="ECO:0007669"/>
    <property type="project" value="InterPro"/>
</dbReference>
<dbReference type="GO" id="GO:0006412">
    <property type="term" value="P:translation"/>
    <property type="evidence" value="ECO:0007669"/>
    <property type="project" value="UniProtKB-UniRule"/>
</dbReference>
<dbReference type="FunFam" id="3.30.70.330:FF:000001">
    <property type="entry name" value="50S ribosomal protein L23"/>
    <property type="match status" value="1"/>
</dbReference>
<dbReference type="Gene3D" id="3.30.70.330">
    <property type="match status" value="1"/>
</dbReference>
<dbReference type="HAMAP" id="MF_01369_B">
    <property type="entry name" value="Ribosomal_uL23_B"/>
    <property type="match status" value="1"/>
</dbReference>
<dbReference type="InterPro" id="IPR012677">
    <property type="entry name" value="Nucleotide-bd_a/b_plait_sf"/>
</dbReference>
<dbReference type="InterPro" id="IPR013025">
    <property type="entry name" value="Ribosomal_uL23-like"/>
</dbReference>
<dbReference type="InterPro" id="IPR012678">
    <property type="entry name" value="Ribosomal_uL23/eL15/eS24_sf"/>
</dbReference>
<dbReference type="InterPro" id="IPR001014">
    <property type="entry name" value="Ribosomal_uL23_CS"/>
</dbReference>
<dbReference type="NCBIfam" id="NF004358">
    <property type="entry name" value="PRK05738.1-1"/>
    <property type="match status" value="1"/>
</dbReference>
<dbReference type="NCBIfam" id="NF004359">
    <property type="entry name" value="PRK05738.1-3"/>
    <property type="match status" value="1"/>
</dbReference>
<dbReference type="NCBIfam" id="NF004360">
    <property type="entry name" value="PRK05738.1-5"/>
    <property type="match status" value="1"/>
</dbReference>
<dbReference type="NCBIfam" id="NF004363">
    <property type="entry name" value="PRK05738.2-4"/>
    <property type="match status" value="1"/>
</dbReference>
<dbReference type="PANTHER" id="PTHR11620">
    <property type="entry name" value="60S RIBOSOMAL PROTEIN L23A"/>
    <property type="match status" value="1"/>
</dbReference>
<dbReference type="Pfam" id="PF00276">
    <property type="entry name" value="Ribosomal_L23"/>
    <property type="match status" value="1"/>
</dbReference>
<dbReference type="SUPFAM" id="SSF54189">
    <property type="entry name" value="Ribosomal proteins S24e, L23 and L15e"/>
    <property type="match status" value="1"/>
</dbReference>
<dbReference type="PROSITE" id="PS00050">
    <property type="entry name" value="RIBOSOMAL_L23"/>
    <property type="match status" value="1"/>
</dbReference>
<sequence>MIREERLLKVLRAPHISEKATMSAEKSNTIVFKVAKDATKKEIKAAVEKLFEVEVKSVNTLIIKGKTKRQGLRQGRRSDVKKAYVTLNEGQDLDFVGGAE</sequence>
<organism>
    <name type="scientific">Vibrio cholerae serotype O1 (strain ATCC 39541 / Classical Ogawa 395 / O395)</name>
    <dbReference type="NCBI Taxonomy" id="345073"/>
    <lineage>
        <taxon>Bacteria</taxon>
        <taxon>Pseudomonadati</taxon>
        <taxon>Pseudomonadota</taxon>
        <taxon>Gammaproteobacteria</taxon>
        <taxon>Vibrionales</taxon>
        <taxon>Vibrionaceae</taxon>
        <taxon>Vibrio</taxon>
    </lineage>
</organism>
<proteinExistence type="inferred from homology"/>
<evidence type="ECO:0000255" key="1">
    <source>
        <dbReference type="HAMAP-Rule" id="MF_01369"/>
    </source>
</evidence>
<evidence type="ECO:0000305" key="2"/>
<feature type="chain" id="PRO_1000073447" description="Large ribosomal subunit protein uL23">
    <location>
        <begin position="1"/>
        <end position="100"/>
    </location>
</feature>
<gene>
    <name evidence="1" type="primary">rplW</name>
    <name type="ordered locus">VC0395_A2172</name>
    <name type="ordered locus">VC395_2707</name>
</gene>
<name>RL23_VIBC3</name>
<protein>
    <recommendedName>
        <fullName evidence="1">Large ribosomal subunit protein uL23</fullName>
    </recommendedName>
    <alternativeName>
        <fullName evidence="2">50S ribosomal protein L23</fullName>
    </alternativeName>
</protein>
<reference key="1">
    <citation type="submission" date="2007-03" db="EMBL/GenBank/DDBJ databases">
        <authorList>
            <person name="Heidelberg J."/>
        </authorList>
    </citation>
    <scope>NUCLEOTIDE SEQUENCE [LARGE SCALE GENOMIC DNA]</scope>
    <source>
        <strain>ATCC 39541 / Classical Ogawa 395 / O395</strain>
    </source>
</reference>
<reference key="2">
    <citation type="journal article" date="2008" name="PLoS ONE">
        <title>A recalibrated molecular clock and independent origins for the cholera pandemic clones.</title>
        <authorList>
            <person name="Feng L."/>
            <person name="Reeves P.R."/>
            <person name="Lan R."/>
            <person name="Ren Y."/>
            <person name="Gao C."/>
            <person name="Zhou Z."/>
            <person name="Ren Y."/>
            <person name="Cheng J."/>
            <person name="Wang W."/>
            <person name="Wang J."/>
            <person name="Qian W."/>
            <person name="Li D."/>
            <person name="Wang L."/>
        </authorList>
    </citation>
    <scope>NUCLEOTIDE SEQUENCE [LARGE SCALE GENOMIC DNA]</scope>
    <source>
        <strain>ATCC 39541 / Classical Ogawa 395 / O395</strain>
    </source>
</reference>
<keyword id="KW-0687">Ribonucleoprotein</keyword>
<keyword id="KW-0689">Ribosomal protein</keyword>
<keyword id="KW-0694">RNA-binding</keyword>
<keyword id="KW-0699">rRNA-binding</keyword>